<accession>P85405</accession>
<name>UP07_GINBI</name>
<proteinExistence type="evidence at protein level"/>
<sequence>GSTTAESAALR</sequence>
<feature type="chain" id="PRO_0000341520" description="Unknown protein 7">
    <location>
        <begin position="1" status="less than"/>
        <end position="11" status="greater than"/>
    </location>
</feature>
<feature type="unsure residue" description="L or I">
    <location>
        <position position="10"/>
    </location>
</feature>
<feature type="non-terminal residue">
    <location>
        <position position="1"/>
    </location>
</feature>
<feature type="non-terminal residue">
    <location>
        <position position="11"/>
    </location>
</feature>
<protein>
    <recommendedName>
        <fullName>Unknown protein 7</fullName>
    </recommendedName>
</protein>
<keyword id="KW-0903">Direct protein sequencing</keyword>
<organism>
    <name type="scientific">Ginkgo biloba</name>
    <name type="common">Ginkgo</name>
    <name type="synonym">Maidenhair tree</name>
    <dbReference type="NCBI Taxonomy" id="3311"/>
    <lineage>
        <taxon>Eukaryota</taxon>
        <taxon>Viridiplantae</taxon>
        <taxon>Streptophyta</taxon>
        <taxon>Embryophyta</taxon>
        <taxon>Tracheophyta</taxon>
        <taxon>Spermatophyta</taxon>
        <taxon>Ginkgoidae</taxon>
        <taxon>Ginkgoales</taxon>
        <taxon>Ginkgoaceae</taxon>
        <taxon>Ginkgo</taxon>
    </lineage>
</organism>
<reference key="1">
    <citation type="journal article" date="2009" name="Physiol. Plantarum">
        <title>The presence of sinapyl lignin in Ginkgo biloba cell cultures changes our views of the evolution of lignin biosynthesis.</title>
        <authorList>
            <person name="Novo Uzal E."/>
            <person name="Gomez Ros L.V."/>
            <person name="Pomar F."/>
            <person name="Bernal M.A."/>
            <person name="Paradela A."/>
            <person name="Albar J.P."/>
            <person name="Ros Barcelo A."/>
        </authorList>
    </citation>
    <scope>PROTEIN SEQUENCE</scope>
    <source>
        <strain>PC-650</strain>
        <tissue>Callus</tissue>
    </source>
</reference>